<sequence length="88" mass="9669">MANIKSAKKRIKVIETKTLRNKMLKSSLKTTIKNFLTVVEGKNVEEAKAAYKTAARALDMSVSKGIIHKNKAARTKSRLAAKLNALNA</sequence>
<organism>
    <name type="scientific">Clostridium botulinum (strain 657 / Type Ba4)</name>
    <dbReference type="NCBI Taxonomy" id="515621"/>
    <lineage>
        <taxon>Bacteria</taxon>
        <taxon>Bacillati</taxon>
        <taxon>Bacillota</taxon>
        <taxon>Clostridia</taxon>
        <taxon>Eubacteriales</taxon>
        <taxon>Clostridiaceae</taxon>
        <taxon>Clostridium</taxon>
    </lineage>
</organism>
<accession>C3L3H5</accession>
<feature type="chain" id="PRO_1000206491" description="Small ribosomal subunit protein bS20">
    <location>
        <begin position="1"/>
        <end position="88"/>
    </location>
</feature>
<proteinExistence type="inferred from homology"/>
<reference key="1">
    <citation type="submission" date="2008-05" db="EMBL/GenBank/DDBJ databases">
        <title>Genome sequence of Clostridium botulinum Ba4 strain 657.</title>
        <authorList>
            <person name="Shrivastava S."/>
            <person name="Brown J.L."/>
            <person name="Bruce D."/>
            <person name="Detter C."/>
            <person name="Munk C."/>
            <person name="Smith L.A."/>
            <person name="Smith T.J."/>
            <person name="Sutton G."/>
            <person name="Brettin T.S."/>
        </authorList>
    </citation>
    <scope>NUCLEOTIDE SEQUENCE [LARGE SCALE GENOMIC DNA]</scope>
    <source>
        <strain>657 / Type Ba4</strain>
    </source>
</reference>
<dbReference type="EMBL" id="CP001083">
    <property type="protein sequence ID" value="ACQ53109.1"/>
    <property type="molecule type" value="Genomic_DNA"/>
</dbReference>
<dbReference type="RefSeq" id="WP_003359995.1">
    <property type="nucleotide sequence ID" value="NC_012658.1"/>
</dbReference>
<dbReference type="SMR" id="C3L3H5"/>
<dbReference type="KEGG" id="cbi:CLJ_B3224"/>
<dbReference type="HOGENOM" id="CLU_160655_0_0_9"/>
<dbReference type="Proteomes" id="UP000002333">
    <property type="component" value="Chromosome"/>
</dbReference>
<dbReference type="GO" id="GO:0005829">
    <property type="term" value="C:cytosol"/>
    <property type="evidence" value="ECO:0007669"/>
    <property type="project" value="TreeGrafter"/>
</dbReference>
<dbReference type="GO" id="GO:0015935">
    <property type="term" value="C:small ribosomal subunit"/>
    <property type="evidence" value="ECO:0007669"/>
    <property type="project" value="TreeGrafter"/>
</dbReference>
<dbReference type="GO" id="GO:0070181">
    <property type="term" value="F:small ribosomal subunit rRNA binding"/>
    <property type="evidence" value="ECO:0007669"/>
    <property type="project" value="TreeGrafter"/>
</dbReference>
<dbReference type="GO" id="GO:0003735">
    <property type="term" value="F:structural constituent of ribosome"/>
    <property type="evidence" value="ECO:0007669"/>
    <property type="project" value="InterPro"/>
</dbReference>
<dbReference type="GO" id="GO:0006412">
    <property type="term" value="P:translation"/>
    <property type="evidence" value="ECO:0007669"/>
    <property type="project" value="UniProtKB-UniRule"/>
</dbReference>
<dbReference type="FunFam" id="1.20.58.110:FF:000001">
    <property type="entry name" value="30S ribosomal protein S20"/>
    <property type="match status" value="1"/>
</dbReference>
<dbReference type="Gene3D" id="1.20.58.110">
    <property type="entry name" value="Ribosomal protein S20"/>
    <property type="match status" value="1"/>
</dbReference>
<dbReference type="HAMAP" id="MF_00500">
    <property type="entry name" value="Ribosomal_bS20"/>
    <property type="match status" value="1"/>
</dbReference>
<dbReference type="InterPro" id="IPR002583">
    <property type="entry name" value="Ribosomal_bS20"/>
</dbReference>
<dbReference type="InterPro" id="IPR036510">
    <property type="entry name" value="Ribosomal_bS20_sf"/>
</dbReference>
<dbReference type="NCBIfam" id="TIGR00029">
    <property type="entry name" value="S20"/>
    <property type="match status" value="1"/>
</dbReference>
<dbReference type="PANTHER" id="PTHR33398">
    <property type="entry name" value="30S RIBOSOMAL PROTEIN S20"/>
    <property type="match status" value="1"/>
</dbReference>
<dbReference type="PANTHER" id="PTHR33398:SF1">
    <property type="entry name" value="SMALL RIBOSOMAL SUBUNIT PROTEIN BS20C"/>
    <property type="match status" value="1"/>
</dbReference>
<dbReference type="Pfam" id="PF01649">
    <property type="entry name" value="Ribosomal_S20p"/>
    <property type="match status" value="1"/>
</dbReference>
<dbReference type="SUPFAM" id="SSF46992">
    <property type="entry name" value="Ribosomal protein S20"/>
    <property type="match status" value="1"/>
</dbReference>
<evidence type="ECO:0000255" key="1">
    <source>
        <dbReference type="HAMAP-Rule" id="MF_00500"/>
    </source>
</evidence>
<evidence type="ECO:0000305" key="2"/>
<name>RS20_CLOB6</name>
<keyword id="KW-0687">Ribonucleoprotein</keyword>
<keyword id="KW-0689">Ribosomal protein</keyword>
<keyword id="KW-0694">RNA-binding</keyword>
<keyword id="KW-0699">rRNA-binding</keyword>
<gene>
    <name evidence="1" type="primary">rpsT</name>
    <name type="ordered locus">CLJ_B3224</name>
</gene>
<protein>
    <recommendedName>
        <fullName evidence="1">Small ribosomal subunit protein bS20</fullName>
    </recommendedName>
    <alternativeName>
        <fullName evidence="2">30S ribosomal protein S20</fullName>
    </alternativeName>
</protein>
<comment type="function">
    <text evidence="1">Binds directly to 16S ribosomal RNA.</text>
</comment>
<comment type="similarity">
    <text evidence="1">Belongs to the bacterial ribosomal protein bS20 family.</text>
</comment>